<dbReference type="EC" id="4.2.1.9" evidence="1"/>
<dbReference type="EMBL" id="AE014299">
    <property type="protein sequence ID" value="AAN57313.1"/>
    <property type="molecule type" value="Genomic_DNA"/>
</dbReference>
<dbReference type="RefSeq" id="NP_719869.1">
    <property type="nucleotide sequence ID" value="NC_004347.2"/>
</dbReference>
<dbReference type="RefSeq" id="WP_011074002.1">
    <property type="nucleotide sequence ID" value="NC_004347.2"/>
</dbReference>
<dbReference type="SMR" id="Q8E9D9"/>
<dbReference type="STRING" id="211586.SO_4345"/>
<dbReference type="PaxDb" id="211586-SO_4345"/>
<dbReference type="KEGG" id="son:SO_4345"/>
<dbReference type="PATRIC" id="fig|211586.12.peg.4209"/>
<dbReference type="eggNOG" id="COG0129">
    <property type="taxonomic scope" value="Bacteria"/>
</dbReference>
<dbReference type="HOGENOM" id="CLU_014271_4_2_6"/>
<dbReference type="OrthoDB" id="9807077at2"/>
<dbReference type="PhylomeDB" id="Q8E9D9"/>
<dbReference type="BioCyc" id="SONE211586:G1GMP-4018-MONOMER"/>
<dbReference type="UniPathway" id="UPA00047">
    <property type="reaction ID" value="UER00057"/>
</dbReference>
<dbReference type="UniPathway" id="UPA00049">
    <property type="reaction ID" value="UER00061"/>
</dbReference>
<dbReference type="Proteomes" id="UP000008186">
    <property type="component" value="Chromosome"/>
</dbReference>
<dbReference type="GO" id="GO:0005829">
    <property type="term" value="C:cytosol"/>
    <property type="evidence" value="ECO:0000318"/>
    <property type="project" value="GO_Central"/>
</dbReference>
<dbReference type="GO" id="GO:0051537">
    <property type="term" value="F:2 iron, 2 sulfur cluster binding"/>
    <property type="evidence" value="ECO:0007669"/>
    <property type="project" value="UniProtKB-UniRule"/>
</dbReference>
<dbReference type="GO" id="GO:0004160">
    <property type="term" value="F:dihydroxy-acid dehydratase activity"/>
    <property type="evidence" value="ECO:0007669"/>
    <property type="project" value="UniProtKB-UniRule"/>
</dbReference>
<dbReference type="GO" id="GO:0016836">
    <property type="term" value="F:hydro-lyase activity"/>
    <property type="evidence" value="ECO:0000318"/>
    <property type="project" value="GO_Central"/>
</dbReference>
<dbReference type="GO" id="GO:0000287">
    <property type="term" value="F:magnesium ion binding"/>
    <property type="evidence" value="ECO:0007669"/>
    <property type="project" value="UniProtKB-UniRule"/>
</dbReference>
<dbReference type="GO" id="GO:0009097">
    <property type="term" value="P:isoleucine biosynthetic process"/>
    <property type="evidence" value="ECO:0007669"/>
    <property type="project" value="UniProtKB-UniRule"/>
</dbReference>
<dbReference type="GO" id="GO:0009099">
    <property type="term" value="P:L-valine biosynthetic process"/>
    <property type="evidence" value="ECO:0007669"/>
    <property type="project" value="UniProtKB-UniRule"/>
</dbReference>
<dbReference type="FunFam" id="3.50.30.80:FF:000001">
    <property type="entry name" value="Dihydroxy-acid dehydratase"/>
    <property type="match status" value="1"/>
</dbReference>
<dbReference type="Gene3D" id="3.50.30.80">
    <property type="entry name" value="IlvD/EDD C-terminal domain-like"/>
    <property type="match status" value="1"/>
</dbReference>
<dbReference type="HAMAP" id="MF_00012">
    <property type="entry name" value="IlvD"/>
    <property type="match status" value="1"/>
</dbReference>
<dbReference type="InterPro" id="IPR042096">
    <property type="entry name" value="Dihydro-acid_dehy_C"/>
</dbReference>
<dbReference type="InterPro" id="IPR004404">
    <property type="entry name" value="DihydroxyA_deHydtase"/>
</dbReference>
<dbReference type="InterPro" id="IPR020558">
    <property type="entry name" value="DiOHA_6PGluconate_deHydtase_CS"/>
</dbReference>
<dbReference type="InterPro" id="IPR056740">
    <property type="entry name" value="ILV_EDD_C"/>
</dbReference>
<dbReference type="InterPro" id="IPR000581">
    <property type="entry name" value="ILV_EDD_N"/>
</dbReference>
<dbReference type="InterPro" id="IPR037237">
    <property type="entry name" value="IlvD/EDD_N"/>
</dbReference>
<dbReference type="NCBIfam" id="TIGR00110">
    <property type="entry name" value="ilvD"/>
    <property type="match status" value="1"/>
</dbReference>
<dbReference type="NCBIfam" id="NF009103">
    <property type="entry name" value="PRK12448.1"/>
    <property type="match status" value="1"/>
</dbReference>
<dbReference type="PANTHER" id="PTHR43661">
    <property type="entry name" value="D-XYLONATE DEHYDRATASE"/>
    <property type="match status" value="1"/>
</dbReference>
<dbReference type="PANTHER" id="PTHR43661:SF3">
    <property type="entry name" value="D-XYLONATE DEHYDRATASE YAGF-RELATED"/>
    <property type="match status" value="1"/>
</dbReference>
<dbReference type="Pfam" id="PF24877">
    <property type="entry name" value="ILV_EDD_C"/>
    <property type="match status" value="1"/>
</dbReference>
<dbReference type="Pfam" id="PF00920">
    <property type="entry name" value="ILVD_EDD_N"/>
    <property type="match status" value="1"/>
</dbReference>
<dbReference type="SUPFAM" id="SSF143975">
    <property type="entry name" value="IlvD/EDD N-terminal domain-like"/>
    <property type="match status" value="1"/>
</dbReference>
<dbReference type="SUPFAM" id="SSF52016">
    <property type="entry name" value="LeuD/IlvD-like"/>
    <property type="match status" value="1"/>
</dbReference>
<dbReference type="PROSITE" id="PS00886">
    <property type="entry name" value="ILVD_EDD_1"/>
    <property type="match status" value="1"/>
</dbReference>
<dbReference type="PROSITE" id="PS00887">
    <property type="entry name" value="ILVD_EDD_2"/>
    <property type="match status" value="1"/>
</dbReference>
<feature type="chain" id="PRO_0000103503" description="Dihydroxy-acid dehydratase">
    <location>
        <begin position="1"/>
        <end position="619"/>
    </location>
</feature>
<feature type="active site" description="Proton acceptor" evidence="1">
    <location>
        <position position="520"/>
    </location>
</feature>
<feature type="binding site" evidence="1">
    <location>
        <position position="81"/>
    </location>
    <ligand>
        <name>Mg(2+)</name>
        <dbReference type="ChEBI" id="CHEBI:18420"/>
    </ligand>
</feature>
<feature type="binding site" evidence="1">
    <location>
        <position position="122"/>
    </location>
    <ligand>
        <name>[2Fe-2S] cluster</name>
        <dbReference type="ChEBI" id="CHEBI:190135"/>
    </ligand>
</feature>
<feature type="binding site" evidence="1">
    <location>
        <position position="123"/>
    </location>
    <ligand>
        <name>Mg(2+)</name>
        <dbReference type="ChEBI" id="CHEBI:18420"/>
    </ligand>
</feature>
<feature type="binding site" description="via carbamate group" evidence="1">
    <location>
        <position position="124"/>
    </location>
    <ligand>
        <name>Mg(2+)</name>
        <dbReference type="ChEBI" id="CHEBI:18420"/>
    </ligand>
</feature>
<feature type="binding site" evidence="1">
    <location>
        <position position="195"/>
    </location>
    <ligand>
        <name>[2Fe-2S] cluster</name>
        <dbReference type="ChEBI" id="CHEBI:190135"/>
    </ligand>
</feature>
<feature type="binding site" evidence="1">
    <location>
        <position position="494"/>
    </location>
    <ligand>
        <name>Mg(2+)</name>
        <dbReference type="ChEBI" id="CHEBI:18420"/>
    </ligand>
</feature>
<feature type="modified residue" description="N6-carboxylysine" evidence="1">
    <location>
        <position position="124"/>
    </location>
</feature>
<reference key="1">
    <citation type="journal article" date="2002" name="Nat. Biotechnol.">
        <title>Genome sequence of the dissimilatory metal ion-reducing bacterium Shewanella oneidensis.</title>
        <authorList>
            <person name="Heidelberg J.F."/>
            <person name="Paulsen I.T."/>
            <person name="Nelson K.E."/>
            <person name="Gaidos E.J."/>
            <person name="Nelson W.C."/>
            <person name="Read T.D."/>
            <person name="Eisen J.A."/>
            <person name="Seshadri R."/>
            <person name="Ward N.L."/>
            <person name="Methe B.A."/>
            <person name="Clayton R.A."/>
            <person name="Meyer T."/>
            <person name="Tsapin A."/>
            <person name="Scott J."/>
            <person name="Beanan M.J."/>
            <person name="Brinkac L.M."/>
            <person name="Daugherty S.C."/>
            <person name="DeBoy R.T."/>
            <person name="Dodson R.J."/>
            <person name="Durkin A.S."/>
            <person name="Haft D.H."/>
            <person name="Kolonay J.F."/>
            <person name="Madupu R."/>
            <person name="Peterson J.D."/>
            <person name="Umayam L.A."/>
            <person name="White O."/>
            <person name="Wolf A.M."/>
            <person name="Vamathevan J.J."/>
            <person name="Weidman J.F."/>
            <person name="Impraim M."/>
            <person name="Lee K."/>
            <person name="Berry K.J."/>
            <person name="Lee C."/>
            <person name="Mueller J."/>
            <person name="Khouri H.M."/>
            <person name="Gill J."/>
            <person name="Utterback T.R."/>
            <person name="McDonald L.A."/>
            <person name="Feldblyum T.V."/>
            <person name="Smith H.O."/>
            <person name="Venter J.C."/>
            <person name="Nealson K.H."/>
            <person name="Fraser C.M."/>
        </authorList>
    </citation>
    <scope>NUCLEOTIDE SEQUENCE [LARGE SCALE GENOMIC DNA]</scope>
    <source>
        <strain>ATCC 700550 / JCM 31522 / CIP 106686 / LMG 19005 / NCIMB 14063 / MR-1</strain>
    </source>
</reference>
<proteinExistence type="inferred from homology"/>
<protein>
    <recommendedName>
        <fullName evidence="1">Dihydroxy-acid dehydratase</fullName>
        <shortName evidence="1">DAD</shortName>
        <ecNumber evidence="1">4.2.1.9</ecNumber>
    </recommendedName>
</protein>
<gene>
    <name evidence="1" type="primary">ilvD</name>
    <name type="ordered locus">SO_4345</name>
</gene>
<name>ILVD_SHEON</name>
<comment type="function">
    <text evidence="1">Functions in the biosynthesis of branched-chain amino acids. Catalyzes the dehydration of (2R,3R)-2,3-dihydroxy-3-methylpentanoate (2,3-dihydroxy-3-methylvalerate) into 2-oxo-3-methylpentanoate (2-oxo-3-methylvalerate) and of (2R)-2,3-dihydroxy-3-methylbutanoate (2,3-dihydroxyisovalerate) into 2-oxo-3-methylbutanoate (2-oxoisovalerate), the penultimate precursor to L-isoleucine and L-valine, respectively.</text>
</comment>
<comment type="catalytic activity">
    <reaction evidence="1">
        <text>(2R)-2,3-dihydroxy-3-methylbutanoate = 3-methyl-2-oxobutanoate + H2O</text>
        <dbReference type="Rhea" id="RHEA:24809"/>
        <dbReference type="ChEBI" id="CHEBI:11851"/>
        <dbReference type="ChEBI" id="CHEBI:15377"/>
        <dbReference type="ChEBI" id="CHEBI:49072"/>
        <dbReference type="EC" id="4.2.1.9"/>
    </reaction>
    <physiologicalReaction direction="left-to-right" evidence="1">
        <dbReference type="Rhea" id="RHEA:24810"/>
    </physiologicalReaction>
</comment>
<comment type="catalytic activity">
    <reaction evidence="1">
        <text>(2R,3R)-2,3-dihydroxy-3-methylpentanoate = (S)-3-methyl-2-oxopentanoate + H2O</text>
        <dbReference type="Rhea" id="RHEA:27694"/>
        <dbReference type="ChEBI" id="CHEBI:15377"/>
        <dbReference type="ChEBI" id="CHEBI:35146"/>
        <dbReference type="ChEBI" id="CHEBI:49258"/>
        <dbReference type="EC" id="4.2.1.9"/>
    </reaction>
    <physiologicalReaction direction="left-to-right" evidence="1">
        <dbReference type="Rhea" id="RHEA:27695"/>
    </physiologicalReaction>
</comment>
<comment type="cofactor">
    <cofactor evidence="1">
        <name>[2Fe-2S] cluster</name>
        <dbReference type="ChEBI" id="CHEBI:190135"/>
    </cofactor>
    <text evidence="1">Binds 1 [2Fe-2S] cluster per subunit. This cluster acts as a Lewis acid cofactor.</text>
</comment>
<comment type="cofactor">
    <cofactor evidence="1">
        <name>Mg(2+)</name>
        <dbReference type="ChEBI" id="CHEBI:18420"/>
    </cofactor>
</comment>
<comment type="pathway">
    <text evidence="1">Amino-acid biosynthesis; L-isoleucine biosynthesis; L-isoleucine from 2-oxobutanoate: step 3/4.</text>
</comment>
<comment type="pathway">
    <text evidence="1">Amino-acid biosynthesis; L-valine biosynthesis; L-valine from pyruvate: step 3/4.</text>
</comment>
<comment type="subunit">
    <text evidence="1">Homodimer.</text>
</comment>
<comment type="similarity">
    <text evidence="1">Belongs to the IlvD/Edd family.</text>
</comment>
<sequence length="619" mass="65511">MPKLRSATSTEGRNMAGARALWRATGVKDNDFGKPIIAIANSFTQFVPGHVHLKDMGSLVASAIEEAGGIAKEFNTIAVDDGIAMGHGGMLYSLPSRELIADSVEYMVNAHCADALVCISNCDKITPGMLMAALRLNIPVVFVSGGPMEAGKTKLSDKLIKLDLVDAMVAAADSSVSDEDSAKIERSACPTCGSCSGMFTANSMNCLTEALGLSLPGNGSMLATHSDRRELFLEAGRRVMALTKRYYEQDDTSALPRNIACFKAFENATALDIAMGGSSNTVLHLLAAAQEAEVAFTMDDIDRMSRLVPHLCKVAPSTPKYHMEDVHRAGGVMGILGELDRAGLLHTDVPHVAADAGGNLKSVLAKYDVMQTQDDNVKQFFMAGPAGIPTTKAFSQDCRWPSLDDDRREGCIRSREFAFSQEGGLAVLSGNLAENGCIVKTAGVDESNLIFVGSARVYESQDDAVAGILGGEVVAGDVVVIRYEGPKGGPGMQEMLYPTSYLKSRGLGKACALITDGRFSGGTSGLSIGHVSPEAAAGGTIALIENGDRIEIDIPARSIKLAVSDAELAGRRETMLARGPMAWKPVGRERFVSMALKAYAMLATSADKGAVRDRSKLED</sequence>
<keyword id="KW-0001">2Fe-2S</keyword>
<keyword id="KW-0028">Amino-acid biosynthesis</keyword>
<keyword id="KW-0100">Branched-chain amino acid biosynthesis</keyword>
<keyword id="KW-0408">Iron</keyword>
<keyword id="KW-0411">Iron-sulfur</keyword>
<keyword id="KW-0456">Lyase</keyword>
<keyword id="KW-0460">Magnesium</keyword>
<keyword id="KW-0479">Metal-binding</keyword>
<keyword id="KW-1185">Reference proteome</keyword>
<accession>Q8E9D9</accession>
<organism>
    <name type="scientific">Shewanella oneidensis (strain ATCC 700550 / JCM 31522 / CIP 106686 / LMG 19005 / NCIMB 14063 / MR-1)</name>
    <dbReference type="NCBI Taxonomy" id="211586"/>
    <lineage>
        <taxon>Bacteria</taxon>
        <taxon>Pseudomonadati</taxon>
        <taxon>Pseudomonadota</taxon>
        <taxon>Gammaproteobacteria</taxon>
        <taxon>Alteromonadales</taxon>
        <taxon>Shewanellaceae</taxon>
        <taxon>Shewanella</taxon>
    </lineage>
</organism>
<evidence type="ECO:0000255" key="1">
    <source>
        <dbReference type="HAMAP-Rule" id="MF_00012"/>
    </source>
</evidence>